<keyword id="KW-0251">Elongation factor</keyword>
<keyword id="KW-0496">Mitochondrion</keyword>
<keyword id="KW-0648">Protein biosynthesis</keyword>
<evidence type="ECO:0000255" key="1">
    <source>
        <dbReference type="HAMAP-Rule" id="MF_03135"/>
    </source>
</evidence>
<evidence type="ECO:0000312" key="2">
    <source>
        <dbReference type="EMBL" id="SCL98097.1"/>
    </source>
</evidence>
<evidence type="ECO:0000312" key="3">
    <source>
        <dbReference type="EMBL" id="VTZ67170.1"/>
    </source>
</evidence>
<evidence type="ECO:0000312" key="4">
    <source>
        <dbReference type="Proteomes" id="UP000071118"/>
    </source>
</evidence>
<reference evidence="4" key="1">
    <citation type="journal article" date="2014" name="BMC Biol.">
        <title>A comprehensive evaluation of rodent malaria parasite genomes and gene expression.</title>
        <authorList>
            <person name="Otto T.D."/>
            <person name="Bohme U."/>
            <person name="Jackson A.P."/>
            <person name="Hunt M."/>
            <person name="Franke-Fayard B."/>
            <person name="Hoeijmakers W.A."/>
            <person name="Religa A.A."/>
            <person name="Robertson L."/>
            <person name="Sanders M."/>
            <person name="Ogun S.A."/>
            <person name="Cunningham D."/>
            <person name="Erhart A."/>
            <person name="Billker O."/>
            <person name="Khan S.M."/>
            <person name="Stunnenberg H.G."/>
            <person name="Langhorne J."/>
            <person name="Holder A.A."/>
            <person name="Waters A.P."/>
            <person name="Newbold C.I."/>
            <person name="Pain A."/>
            <person name="Berriman M."/>
            <person name="Janse C.J."/>
        </authorList>
    </citation>
    <scope>NUCLEOTIDE SEQUENCE [LARGE SCALE GENOMIC DNA]</scope>
    <source>
        <strain evidence="4">AS</strain>
    </source>
</reference>
<reference evidence="2" key="2">
    <citation type="submission" date="2016-08" db="EMBL/GenBank/DDBJ databases">
        <authorList>
            <consortium name="Pathogen Informatics"/>
        </authorList>
    </citation>
    <scope>NUCLEOTIDE SEQUENCE [LARGE SCALE GENOMIC DNA]</scope>
    <source>
        <strain>AJ</strain>
    </source>
</reference>
<dbReference type="EMBL" id="LK022881">
    <property type="protein sequence ID" value="VTZ67170.1"/>
    <property type="molecule type" value="Genomic_DNA"/>
</dbReference>
<dbReference type="EMBL" id="LT608170">
    <property type="protein sequence ID" value="SCL98097.1"/>
    <property type="molecule type" value="Genomic_DNA"/>
</dbReference>
<dbReference type="RefSeq" id="XP_743489.1">
    <property type="nucleotide sequence ID" value="XM_738396.1"/>
</dbReference>
<dbReference type="SMR" id="Q4XUG7"/>
<dbReference type="EnsemblProtists" id="CDR11192">
    <property type="protein sequence ID" value="CDR11192"/>
    <property type="gene ID" value="PCHAS_040440"/>
</dbReference>
<dbReference type="GeneID" id="3496593"/>
<dbReference type="KEGG" id="pcb:PCHAS_0404400"/>
<dbReference type="VEuPathDB" id="PlasmoDB:PCHAS_0404400"/>
<dbReference type="eggNOG" id="KOG1071">
    <property type="taxonomic scope" value="Eukaryota"/>
</dbReference>
<dbReference type="HOGENOM" id="CLU_047155_2_0_1"/>
<dbReference type="OrthoDB" id="277235at2759"/>
<dbReference type="Proteomes" id="UP000071118">
    <property type="component" value="Chromosome 4"/>
</dbReference>
<dbReference type="Proteomes" id="UP000507163">
    <property type="component" value="Chromosome 4"/>
</dbReference>
<dbReference type="GO" id="GO:0005739">
    <property type="term" value="C:mitochondrion"/>
    <property type="evidence" value="ECO:0007669"/>
    <property type="project" value="UniProtKB-SubCell"/>
</dbReference>
<dbReference type="GO" id="GO:0003746">
    <property type="term" value="F:translation elongation factor activity"/>
    <property type="evidence" value="ECO:0007669"/>
    <property type="project" value="UniProtKB-UniRule"/>
</dbReference>
<dbReference type="GO" id="GO:0070125">
    <property type="term" value="P:mitochondrial translational elongation"/>
    <property type="evidence" value="ECO:0007669"/>
    <property type="project" value="TreeGrafter"/>
</dbReference>
<dbReference type="CDD" id="cd14273">
    <property type="entry name" value="UBA_TAP-C_like"/>
    <property type="match status" value="1"/>
</dbReference>
<dbReference type="Gene3D" id="1.10.286.20">
    <property type="match status" value="1"/>
</dbReference>
<dbReference type="Gene3D" id="1.10.8.10">
    <property type="entry name" value="DNA helicase RuvA subunit, C-terminal domain"/>
    <property type="match status" value="1"/>
</dbReference>
<dbReference type="Gene3D" id="3.30.479.20">
    <property type="entry name" value="Elongation factor Ts, dimerisation domain"/>
    <property type="match status" value="2"/>
</dbReference>
<dbReference type="HAMAP" id="MF_00050">
    <property type="entry name" value="EF_Ts"/>
    <property type="match status" value="1"/>
</dbReference>
<dbReference type="InterPro" id="IPR036402">
    <property type="entry name" value="EF-Ts_dimer_sf"/>
</dbReference>
<dbReference type="InterPro" id="IPR001816">
    <property type="entry name" value="Transl_elong_EFTs/EF1B"/>
</dbReference>
<dbReference type="InterPro" id="IPR014039">
    <property type="entry name" value="Transl_elong_EFTs/EF1B_dimer"/>
</dbReference>
<dbReference type="InterPro" id="IPR009060">
    <property type="entry name" value="UBA-like_sf"/>
</dbReference>
<dbReference type="NCBIfam" id="TIGR00116">
    <property type="entry name" value="tsf"/>
    <property type="match status" value="1"/>
</dbReference>
<dbReference type="PANTHER" id="PTHR11741">
    <property type="entry name" value="ELONGATION FACTOR TS"/>
    <property type="match status" value="1"/>
</dbReference>
<dbReference type="PANTHER" id="PTHR11741:SF0">
    <property type="entry name" value="ELONGATION FACTOR TS, MITOCHONDRIAL"/>
    <property type="match status" value="1"/>
</dbReference>
<dbReference type="Pfam" id="PF00889">
    <property type="entry name" value="EF_TS"/>
    <property type="match status" value="1"/>
</dbReference>
<dbReference type="SUPFAM" id="SSF54713">
    <property type="entry name" value="Elongation factor Ts (EF-Ts), dimerisation domain"/>
    <property type="match status" value="1"/>
</dbReference>
<dbReference type="SUPFAM" id="SSF46934">
    <property type="entry name" value="UBA-like"/>
    <property type="match status" value="1"/>
</dbReference>
<comment type="function">
    <text evidence="1">Associates with the EF-Tu.GDP complex and induces the exchange of GDP to GTP. It remains bound to the aminoacyl-tRNA.EF-Tu.GTP complex up to the GTP hydrolysis stage on the ribosome.</text>
</comment>
<comment type="subcellular location">
    <subcellularLocation>
        <location evidence="1">Mitochondrion</location>
    </subcellularLocation>
</comment>
<comment type="miscellaneous">
    <text evidence="1">This protein may be expected to contain an N-terminal transit peptide but none has been predicted.</text>
</comment>
<comment type="similarity">
    <text evidence="1">Belongs to the EF-Ts family.</text>
</comment>
<protein>
    <recommendedName>
        <fullName evidence="1">Elongation factor Ts, mitochondrial</fullName>
        <shortName evidence="1">EF-Ts</shortName>
        <shortName evidence="1">EF-TsMt</shortName>
    </recommendedName>
</protein>
<accession>Q4XUG7</accession>
<accession>A0A077TJ76</accession>
<sequence>MRYSLFLEFFFVFVLTCSLDVICYKRTSSLNLVTDIKQIKNKSIHKRNRLYSSNENLKRLKYIREVTNASIQVCNDALKECNNDVDKAIELVRKNTKNGSFISTSVKTQKEGLICSDIMDDKIVLIELLTDSDFVARNNKFVTFLKNISKLCLHNEIIPPNIDVNDSVENFDTSLVAIDKIMQSPYTNSNGEINGTVSEELNYLRNIFREDIKIGRFSKYIKKNENEFLHYYIHNIVDGNNVGLSGVMLVIEIDNLNEKLKTKEKDIISFANDLCMHIISAKPVSVSIDKVNQNVVKKEMDIIRDSLKDLNKPENIITNMINGKMKKFYSNVVLLEQEYMLDDTKRKVSQVIKDFSKNNDLTINVKHFDNFIVGEKNILV</sequence>
<gene>
    <name type="ORF">PC000299.03.0</name>
    <name evidence="3" type="ORF">PCHAS_0404400</name>
</gene>
<proteinExistence type="inferred from homology"/>
<name>EFTS_PLACU</name>
<feature type="chain" id="PRO_0000402333" description="Elongation factor Ts, mitochondrial">
    <location>
        <begin position="1"/>
        <end position="380"/>
    </location>
</feature>
<organism evidence="4">
    <name type="scientific">Plasmodium chabaudi chabaudi</name>
    <dbReference type="NCBI Taxonomy" id="31271"/>
    <lineage>
        <taxon>Eukaryota</taxon>
        <taxon>Sar</taxon>
        <taxon>Alveolata</taxon>
        <taxon>Apicomplexa</taxon>
        <taxon>Aconoidasida</taxon>
        <taxon>Haemosporida</taxon>
        <taxon>Plasmodiidae</taxon>
        <taxon>Plasmodium</taxon>
        <taxon>Plasmodium (Vinckeia)</taxon>
    </lineage>
</organism>